<comment type="function">
    <text evidence="1">Catalyzes the last two sequential reactions in the de novo biosynthetic pathway for UDP-N-acetylglucosamine (UDP-GlcNAc). The C-terminal domain catalyzes the transfer of acetyl group from acetyl coenzyme A to glucosamine-1-phosphate (GlcN-1-P) to produce N-acetylglucosamine-1-phosphate (GlcNAc-1-P), which is converted into UDP-GlcNAc by the transfer of uridine 5-monophosphate (from uridine 5-triphosphate), a reaction catalyzed by the N-terminal domain.</text>
</comment>
<comment type="catalytic activity">
    <reaction evidence="1">
        <text>alpha-D-glucosamine 1-phosphate + acetyl-CoA = N-acetyl-alpha-D-glucosamine 1-phosphate + CoA + H(+)</text>
        <dbReference type="Rhea" id="RHEA:13725"/>
        <dbReference type="ChEBI" id="CHEBI:15378"/>
        <dbReference type="ChEBI" id="CHEBI:57287"/>
        <dbReference type="ChEBI" id="CHEBI:57288"/>
        <dbReference type="ChEBI" id="CHEBI:57776"/>
        <dbReference type="ChEBI" id="CHEBI:58516"/>
        <dbReference type="EC" id="2.3.1.157"/>
    </reaction>
</comment>
<comment type="catalytic activity">
    <reaction evidence="1">
        <text>N-acetyl-alpha-D-glucosamine 1-phosphate + UTP + H(+) = UDP-N-acetyl-alpha-D-glucosamine + diphosphate</text>
        <dbReference type="Rhea" id="RHEA:13509"/>
        <dbReference type="ChEBI" id="CHEBI:15378"/>
        <dbReference type="ChEBI" id="CHEBI:33019"/>
        <dbReference type="ChEBI" id="CHEBI:46398"/>
        <dbReference type="ChEBI" id="CHEBI:57705"/>
        <dbReference type="ChEBI" id="CHEBI:57776"/>
        <dbReference type="EC" id="2.7.7.23"/>
    </reaction>
</comment>
<comment type="cofactor">
    <cofactor evidence="1">
        <name>Mg(2+)</name>
        <dbReference type="ChEBI" id="CHEBI:18420"/>
    </cofactor>
    <text evidence="1">Binds 1 Mg(2+) ion per subunit.</text>
</comment>
<comment type="pathway">
    <text evidence="1">Nucleotide-sugar biosynthesis; UDP-N-acetyl-alpha-D-glucosamine biosynthesis; N-acetyl-alpha-D-glucosamine 1-phosphate from alpha-D-glucosamine 6-phosphate (route II): step 2/2.</text>
</comment>
<comment type="pathway">
    <text evidence="1">Nucleotide-sugar biosynthesis; UDP-N-acetyl-alpha-D-glucosamine biosynthesis; UDP-N-acetyl-alpha-D-glucosamine from N-acetyl-alpha-D-glucosamine 1-phosphate: step 1/1.</text>
</comment>
<comment type="pathway">
    <text evidence="1">Bacterial outer membrane biogenesis; LPS lipid A biosynthesis.</text>
</comment>
<comment type="subunit">
    <text evidence="1">Homotrimer.</text>
</comment>
<comment type="subcellular location">
    <subcellularLocation>
        <location evidence="1">Cytoplasm</location>
    </subcellularLocation>
</comment>
<comment type="similarity">
    <text evidence="1">In the N-terminal section; belongs to the N-acetylglucosamine-1-phosphate uridyltransferase family.</text>
</comment>
<comment type="similarity">
    <text evidence="1">In the C-terminal section; belongs to the transferase hexapeptide repeat family.</text>
</comment>
<comment type="sequence caution" evidence="2">
    <conflict type="erroneous initiation">
        <sequence resource="EMBL-CDS" id="ABN53828"/>
    </conflict>
</comment>
<accession>A3DIP9</accession>
<organism>
    <name type="scientific">Acetivibrio thermocellus (strain ATCC 27405 / DSM 1237 / JCM 9322 / NBRC 103400 / NCIMB 10682 / NRRL B-4536 / VPI 7372)</name>
    <name type="common">Clostridium thermocellum</name>
    <dbReference type="NCBI Taxonomy" id="203119"/>
    <lineage>
        <taxon>Bacteria</taxon>
        <taxon>Bacillati</taxon>
        <taxon>Bacillota</taxon>
        <taxon>Clostridia</taxon>
        <taxon>Eubacteriales</taxon>
        <taxon>Oscillospiraceae</taxon>
        <taxon>Acetivibrio</taxon>
    </lineage>
</organism>
<feature type="chain" id="PRO_0000337718" description="Bifunctional protein GlmU">
    <location>
        <begin position="1"/>
        <end position="461"/>
    </location>
</feature>
<feature type="region of interest" description="Pyrophosphorylase" evidence="1">
    <location>
        <begin position="1"/>
        <end position="230"/>
    </location>
</feature>
<feature type="region of interest" description="Linker" evidence="1">
    <location>
        <begin position="231"/>
        <end position="251"/>
    </location>
</feature>
<feature type="region of interest" description="N-acetyltransferase" evidence="1">
    <location>
        <begin position="252"/>
        <end position="461"/>
    </location>
</feature>
<feature type="active site" description="Proton acceptor" evidence="1">
    <location>
        <position position="363"/>
    </location>
</feature>
<feature type="binding site" evidence="1">
    <location>
        <begin position="9"/>
        <end position="12"/>
    </location>
    <ligand>
        <name>UDP-N-acetyl-alpha-D-glucosamine</name>
        <dbReference type="ChEBI" id="CHEBI:57705"/>
    </ligand>
</feature>
<feature type="binding site" evidence="1">
    <location>
        <position position="23"/>
    </location>
    <ligand>
        <name>UDP-N-acetyl-alpha-D-glucosamine</name>
        <dbReference type="ChEBI" id="CHEBI:57705"/>
    </ligand>
</feature>
<feature type="binding site" evidence="1">
    <location>
        <position position="73"/>
    </location>
    <ligand>
        <name>UDP-N-acetyl-alpha-D-glucosamine</name>
        <dbReference type="ChEBI" id="CHEBI:57705"/>
    </ligand>
</feature>
<feature type="binding site" evidence="1">
    <location>
        <begin position="78"/>
        <end position="79"/>
    </location>
    <ligand>
        <name>UDP-N-acetyl-alpha-D-glucosamine</name>
        <dbReference type="ChEBI" id="CHEBI:57705"/>
    </ligand>
</feature>
<feature type="binding site" evidence="1">
    <location>
        <begin position="101"/>
        <end position="103"/>
    </location>
    <ligand>
        <name>UDP-N-acetyl-alpha-D-glucosamine</name>
        <dbReference type="ChEBI" id="CHEBI:57705"/>
    </ligand>
</feature>
<feature type="binding site" evidence="1">
    <location>
        <position position="103"/>
    </location>
    <ligand>
        <name>Mg(2+)</name>
        <dbReference type="ChEBI" id="CHEBI:18420"/>
    </ligand>
</feature>
<feature type="binding site" evidence="1">
    <location>
        <position position="140"/>
    </location>
    <ligand>
        <name>UDP-N-acetyl-alpha-D-glucosamine</name>
        <dbReference type="ChEBI" id="CHEBI:57705"/>
    </ligand>
</feature>
<feature type="binding site" evidence="1">
    <location>
        <position position="155"/>
    </location>
    <ligand>
        <name>UDP-N-acetyl-alpha-D-glucosamine</name>
        <dbReference type="ChEBI" id="CHEBI:57705"/>
    </ligand>
</feature>
<feature type="binding site" evidence="1">
    <location>
        <position position="170"/>
    </location>
    <ligand>
        <name>UDP-N-acetyl-alpha-D-glucosamine</name>
        <dbReference type="ChEBI" id="CHEBI:57705"/>
    </ligand>
</feature>
<feature type="binding site" evidence="1">
    <location>
        <position position="228"/>
    </location>
    <ligand>
        <name>Mg(2+)</name>
        <dbReference type="ChEBI" id="CHEBI:18420"/>
    </ligand>
</feature>
<feature type="binding site" evidence="1">
    <location>
        <position position="228"/>
    </location>
    <ligand>
        <name>UDP-N-acetyl-alpha-D-glucosamine</name>
        <dbReference type="ChEBI" id="CHEBI:57705"/>
    </ligand>
</feature>
<feature type="binding site" evidence="1">
    <location>
        <position position="333"/>
    </location>
    <ligand>
        <name>UDP-N-acetyl-alpha-D-glucosamine</name>
        <dbReference type="ChEBI" id="CHEBI:57705"/>
    </ligand>
</feature>
<feature type="binding site" evidence="1">
    <location>
        <position position="351"/>
    </location>
    <ligand>
        <name>UDP-N-acetyl-alpha-D-glucosamine</name>
        <dbReference type="ChEBI" id="CHEBI:57705"/>
    </ligand>
</feature>
<feature type="binding site" evidence="1">
    <location>
        <position position="366"/>
    </location>
    <ligand>
        <name>UDP-N-acetyl-alpha-D-glucosamine</name>
        <dbReference type="ChEBI" id="CHEBI:57705"/>
    </ligand>
</feature>
<feature type="binding site" evidence="1">
    <location>
        <position position="377"/>
    </location>
    <ligand>
        <name>UDP-N-acetyl-alpha-D-glucosamine</name>
        <dbReference type="ChEBI" id="CHEBI:57705"/>
    </ligand>
</feature>
<feature type="binding site" evidence="1">
    <location>
        <begin position="386"/>
        <end position="387"/>
    </location>
    <ligand>
        <name>acetyl-CoA</name>
        <dbReference type="ChEBI" id="CHEBI:57288"/>
    </ligand>
</feature>
<feature type="binding site" evidence="1">
    <location>
        <position position="423"/>
    </location>
    <ligand>
        <name>acetyl-CoA</name>
        <dbReference type="ChEBI" id="CHEBI:57288"/>
    </ligand>
</feature>
<feature type="binding site" evidence="1">
    <location>
        <position position="440"/>
    </location>
    <ligand>
        <name>acetyl-CoA</name>
        <dbReference type="ChEBI" id="CHEBI:57288"/>
    </ligand>
</feature>
<protein>
    <recommendedName>
        <fullName evidence="1">Bifunctional protein GlmU</fullName>
    </recommendedName>
    <domain>
        <recommendedName>
            <fullName evidence="1">UDP-N-acetylglucosamine pyrophosphorylase</fullName>
            <ecNumber evidence="1">2.7.7.23</ecNumber>
        </recommendedName>
        <alternativeName>
            <fullName evidence="1">N-acetylglucosamine-1-phosphate uridyltransferase</fullName>
        </alternativeName>
    </domain>
    <domain>
        <recommendedName>
            <fullName evidence="1">Glucosamine-1-phosphate N-acetyltransferase</fullName>
            <ecNumber evidence="1">2.3.1.157</ecNumber>
        </recommendedName>
    </domain>
</protein>
<dbReference type="EC" id="2.7.7.23" evidence="1"/>
<dbReference type="EC" id="2.3.1.157" evidence="1"/>
<dbReference type="EMBL" id="CP000568">
    <property type="protein sequence ID" value="ABN53828.1"/>
    <property type="status" value="ALT_INIT"/>
    <property type="molecule type" value="Genomic_DNA"/>
</dbReference>
<dbReference type="RefSeq" id="WP_003512915.1">
    <property type="nucleotide sequence ID" value="NC_009012.1"/>
</dbReference>
<dbReference type="SMR" id="A3DIP9"/>
<dbReference type="STRING" id="203119.Cthe_2629"/>
<dbReference type="GeneID" id="35804246"/>
<dbReference type="KEGG" id="cth:Cthe_2629"/>
<dbReference type="eggNOG" id="COG1207">
    <property type="taxonomic scope" value="Bacteria"/>
</dbReference>
<dbReference type="HOGENOM" id="CLU_029499_15_2_9"/>
<dbReference type="OrthoDB" id="9775031at2"/>
<dbReference type="UniPathway" id="UPA00113">
    <property type="reaction ID" value="UER00532"/>
</dbReference>
<dbReference type="UniPathway" id="UPA00113">
    <property type="reaction ID" value="UER00533"/>
</dbReference>
<dbReference type="UniPathway" id="UPA00973"/>
<dbReference type="Proteomes" id="UP000002145">
    <property type="component" value="Chromosome"/>
</dbReference>
<dbReference type="GO" id="GO:0005737">
    <property type="term" value="C:cytoplasm"/>
    <property type="evidence" value="ECO:0007669"/>
    <property type="project" value="UniProtKB-SubCell"/>
</dbReference>
<dbReference type="GO" id="GO:0016020">
    <property type="term" value="C:membrane"/>
    <property type="evidence" value="ECO:0007669"/>
    <property type="project" value="GOC"/>
</dbReference>
<dbReference type="GO" id="GO:0019134">
    <property type="term" value="F:glucosamine-1-phosphate N-acetyltransferase activity"/>
    <property type="evidence" value="ECO:0007669"/>
    <property type="project" value="UniProtKB-UniRule"/>
</dbReference>
<dbReference type="GO" id="GO:0000287">
    <property type="term" value="F:magnesium ion binding"/>
    <property type="evidence" value="ECO:0007669"/>
    <property type="project" value="UniProtKB-UniRule"/>
</dbReference>
<dbReference type="GO" id="GO:0003977">
    <property type="term" value="F:UDP-N-acetylglucosamine diphosphorylase activity"/>
    <property type="evidence" value="ECO:0007669"/>
    <property type="project" value="UniProtKB-UniRule"/>
</dbReference>
<dbReference type="GO" id="GO:0000902">
    <property type="term" value="P:cell morphogenesis"/>
    <property type="evidence" value="ECO:0007669"/>
    <property type="project" value="UniProtKB-UniRule"/>
</dbReference>
<dbReference type="GO" id="GO:0071555">
    <property type="term" value="P:cell wall organization"/>
    <property type="evidence" value="ECO:0007669"/>
    <property type="project" value="UniProtKB-KW"/>
</dbReference>
<dbReference type="GO" id="GO:0009245">
    <property type="term" value="P:lipid A biosynthetic process"/>
    <property type="evidence" value="ECO:0007669"/>
    <property type="project" value="UniProtKB-UniRule"/>
</dbReference>
<dbReference type="GO" id="GO:0009252">
    <property type="term" value="P:peptidoglycan biosynthetic process"/>
    <property type="evidence" value="ECO:0007669"/>
    <property type="project" value="UniProtKB-UniRule"/>
</dbReference>
<dbReference type="GO" id="GO:0008360">
    <property type="term" value="P:regulation of cell shape"/>
    <property type="evidence" value="ECO:0007669"/>
    <property type="project" value="UniProtKB-KW"/>
</dbReference>
<dbReference type="GO" id="GO:0006048">
    <property type="term" value="P:UDP-N-acetylglucosamine biosynthetic process"/>
    <property type="evidence" value="ECO:0007669"/>
    <property type="project" value="UniProtKB-UniPathway"/>
</dbReference>
<dbReference type="CDD" id="cd02540">
    <property type="entry name" value="GT2_GlmU_N_bac"/>
    <property type="match status" value="1"/>
</dbReference>
<dbReference type="CDD" id="cd03353">
    <property type="entry name" value="LbH_GlmU_C"/>
    <property type="match status" value="1"/>
</dbReference>
<dbReference type="Gene3D" id="2.160.10.10">
    <property type="entry name" value="Hexapeptide repeat proteins"/>
    <property type="match status" value="1"/>
</dbReference>
<dbReference type="Gene3D" id="3.90.550.10">
    <property type="entry name" value="Spore Coat Polysaccharide Biosynthesis Protein SpsA, Chain A"/>
    <property type="match status" value="1"/>
</dbReference>
<dbReference type="HAMAP" id="MF_01631">
    <property type="entry name" value="GlmU"/>
    <property type="match status" value="1"/>
</dbReference>
<dbReference type="InterPro" id="IPR005882">
    <property type="entry name" value="Bifunctional_GlmU"/>
</dbReference>
<dbReference type="InterPro" id="IPR050065">
    <property type="entry name" value="GlmU-like"/>
</dbReference>
<dbReference type="InterPro" id="IPR038009">
    <property type="entry name" value="GlmU_C_LbH"/>
</dbReference>
<dbReference type="InterPro" id="IPR001451">
    <property type="entry name" value="Hexapep"/>
</dbReference>
<dbReference type="InterPro" id="IPR005835">
    <property type="entry name" value="NTP_transferase_dom"/>
</dbReference>
<dbReference type="InterPro" id="IPR029044">
    <property type="entry name" value="Nucleotide-diphossugar_trans"/>
</dbReference>
<dbReference type="InterPro" id="IPR011004">
    <property type="entry name" value="Trimer_LpxA-like_sf"/>
</dbReference>
<dbReference type="NCBIfam" id="TIGR01173">
    <property type="entry name" value="glmU"/>
    <property type="match status" value="1"/>
</dbReference>
<dbReference type="NCBIfam" id="NF010934">
    <property type="entry name" value="PRK14354.1"/>
    <property type="match status" value="1"/>
</dbReference>
<dbReference type="PANTHER" id="PTHR43584:SF3">
    <property type="entry name" value="BIFUNCTIONAL PROTEIN GLMU"/>
    <property type="match status" value="1"/>
</dbReference>
<dbReference type="PANTHER" id="PTHR43584">
    <property type="entry name" value="NUCLEOTIDYL TRANSFERASE"/>
    <property type="match status" value="1"/>
</dbReference>
<dbReference type="Pfam" id="PF00132">
    <property type="entry name" value="Hexapep"/>
    <property type="match status" value="3"/>
</dbReference>
<dbReference type="Pfam" id="PF00483">
    <property type="entry name" value="NTP_transferase"/>
    <property type="match status" value="1"/>
</dbReference>
<dbReference type="SUPFAM" id="SSF53448">
    <property type="entry name" value="Nucleotide-diphospho-sugar transferases"/>
    <property type="match status" value="1"/>
</dbReference>
<dbReference type="SUPFAM" id="SSF51161">
    <property type="entry name" value="Trimeric LpxA-like enzymes"/>
    <property type="match status" value="1"/>
</dbReference>
<gene>
    <name evidence="1" type="primary">glmU</name>
    <name type="ordered locus">Cthe_2629</name>
</gene>
<sequence>MECLMAVILAAGEGKRMKSKKAKVVHEIQGIPLVEWVYRSVKNAGIDEVVLVVGHKAEEVKEKMGDKVLYAFQEKQLGTGHALMQAQEYLKDKDGYVVVLYGDTPLITSKTISDTINYHREQANSATIITAVLNNPDGYGRIVRSGDGSVRKIVEHKDASLEERNIKEINSGIYCFNIRDLTEALKELDNNNSQGEYYLTDTIEILINKGKKVGAIKVEDSSEILGINDRVQLAEAGRIIRSRILKRHMKNGVTIIDPDSTYIDEDVEIGIDTVVYPSTIIEGKTKIGEDCIIGPGSRLVNAQISDRVEVKNSVVLESSIDNDTKVGPFAYVRPGSVIGKNVKIGDFVEIKKSVIGDKTKISHLTYVGDAEVGKNVNLGCGVVVVNYDGKKKNKTIIGDNAFVGCNVNLISPVEVKDNAYVAAGSTITEEVPEYSLAIARSRQTIKEDWVIKKGMLRQEKE</sequence>
<reference key="1">
    <citation type="submission" date="2007-02" db="EMBL/GenBank/DDBJ databases">
        <title>Complete sequence of Clostridium thermocellum ATCC 27405.</title>
        <authorList>
            <consortium name="US DOE Joint Genome Institute"/>
            <person name="Copeland A."/>
            <person name="Lucas S."/>
            <person name="Lapidus A."/>
            <person name="Barry K."/>
            <person name="Detter J.C."/>
            <person name="Glavina del Rio T."/>
            <person name="Hammon N."/>
            <person name="Israni S."/>
            <person name="Dalin E."/>
            <person name="Tice H."/>
            <person name="Pitluck S."/>
            <person name="Chertkov O."/>
            <person name="Brettin T."/>
            <person name="Bruce D."/>
            <person name="Han C."/>
            <person name="Tapia R."/>
            <person name="Gilna P."/>
            <person name="Schmutz J."/>
            <person name="Larimer F."/>
            <person name="Land M."/>
            <person name="Hauser L."/>
            <person name="Kyrpides N."/>
            <person name="Mikhailova N."/>
            <person name="Wu J.H.D."/>
            <person name="Newcomb M."/>
            <person name="Richardson P."/>
        </authorList>
    </citation>
    <scope>NUCLEOTIDE SEQUENCE [LARGE SCALE GENOMIC DNA]</scope>
    <source>
        <strain>ATCC 27405 / DSM 1237 / JCM 9322 / NBRC 103400 / NCIMB 10682 / NRRL B-4536 / VPI 7372</strain>
    </source>
</reference>
<proteinExistence type="inferred from homology"/>
<name>GLMU_ACET2</name>
<keyword id="KW-0012">Acyltransferase</keyword>
<keyword id="KW-0133">Cell shape</keyword>
<keyword id="KW-0961">Cell wall biogenesis/degradation</keyword>
<keyword id="KW-0963">Cytoplasm</keyword>
<keyword id="KW-0460">Magnesium</keyword>
<keyword id="KW-0479">Metal-binding</keyword>
<keyword id="KW-0511">Multifunctional enzyme</keyword>
<keyword id="KW-0548">Nucleotidyltransferase</keyword>
<keyword id="KW-0573">Peptidoglycan synthesis</keyword>
<keyword id="KW-1185">Reference proteome</keyword>
<keyword id="KW-0677">Repeat</keyword>
<keyword id="KW-0808">Transferase</keyword>
<evidence type="ECO:0000255" key="1">
    <source>
        <dbReference type="HAMAP-Rule" id="MF_01631"/>
    </source>
</evidence>
<evidence type="ECO:0000305" key="2"/>